<accession>B6IYY4</accession>
<reference key="1">
    <citation type="journal article" date="2009" name="Infect. Immun.">
        <title>Comparative genomics reveal extensive transposon-mediated genomic plasticity and diversity among potential effector proteins within the genus Coxiella.</title>
        <authorList>
            <person name="Beare P.A."/>
            <person name="Unsworth N."/>
            <person name="Andoh M."/>
            <person name="Voth D.E."/>
            <person name="Omsland A."/>
            <person name="Gilk S.D."/>
            <person name="Williams K.P."/>
            <person name="Sobral B.W."/>
            <person name="Kupko J.J. III"/>
            <person name="Porcella S.F."/>
            <person name="Samuel J.E."/>
            <person name="Heinzen R.A."/>
        </authorList>
    </citation>
    <scope>NUCLEOTIDE SEQUENCE [LARGE SCALE GENOMIC DNA]</scope>
    <source>
        <strain>CbuG_Q212</strain>
    </source>
</reference>
<organism>
    <name type="scientific">Coxiella burnetii (strain CbuG_Q212)</name>
    <name type="common">Coxiella burnetii (strain Q212)</name>
    <dbReference type="NCBI Taxonomy" id="434923"/>
    <lineage>
        <taxon>Bacteria</taxon>
        <taxon>Pseudomonadati</taxon>
        <taxon>Pseudomonadota</taxon>
        <taxon>Gammaproteobacteria</taxon>
        <taxon>Legionellales</taxon>
        <taxon>Coxiellaceae</taxon>
        <taxon>Coxiella</taxon>
    </lineage>
</organism>
<keyword id="KW-0143">Chaperone</keyword>
<keyword id="KW-0963">Cytoplasm</keyword>
<keyword id="KW-0653">Protein transport</keyword>
<keyword id="KW-0811">Translocation</keyword>
<keyword id="KW-0813">Transport</keyword>
<protein>
    <recommendedName>
        <fullName evidence="1">Protein-export protein SecB</fullName>
    </recommendedName>
</protein>
<sequence length="161" mass="18367">MAEQNQRTNTPDNGSEFAIQRLYIKDLSFEAPRSPQVFLEEWQPELNMDLATKVNDLGEDNHEVVLTVTVTVTMKESHIFLAEVQQGGIFTIKNFPKEEMRPMLGSFCPNILYPYAREAITDMVVRGGFPQLYLAPVNFDALFEQHEQSEEGNSGTEDRVH</sequence>
<name>SECB_COXB2</name>
<feature type="chain" id="PRO_1000134373" description="Protein-export protein SecB">
    <location>
        <begin position="1"/>
        <end position="161"/>
    </location>
</feature>
<dbReference type="EMBL" id="CP001019">
    <property type="protein sequence ID" value="ACJ17912.1"/>
    <property type="molecule type" value="Genomic_DNA"/>
</dbReference>
<dbReference type="RefSeq" id="WP_012569788.1">
    <property type="nucleotide sequence ID" value="NC_011527.1"/>
</dbReference>
<dbReference type="SMR" id="B6IYY4"/>
<dbReference type="KEGG" id="cbg:CbuG_0490"/>
<dbReference type="HOGENOM" id="CLU_111574_1_0_6"/>
<dbReference type="GO" id="GO:0005737">
    <property type="term" value="C:cytoplasm"/>
    <property type="evidence" value="ECO:0007669"/>
    <property type="project" value="UniProtKB-SubCell"/>
</dbReference>
<dbReference type="GO" id="GO:0051082">
    <property type="term" value="F:unfolded protein binding"/>
    <property type="evidence" value="ECO:0007669"/>
    <property type="project" value="InterPro"/>
</dbReference>
<dbReference type="GO" id="GO:0006457">
    <property type="term" value="P:protein folding"/>
    <property type="evidence" value="ECO:0007669"/>
    <property type="project" value="UniProtKB-UniRule"/>
</dbReference>
<dbReference type="GO" id="GO:0051262">
    <property type="term" value="P:protein tetramerization"/>
    <property type="evidence" value="ECO:0007669"/>
    <property type="project" value="InterPro"/>
</dbReference>
<dbReference type="GO" id="GO:0015031">
    <property type="term" value="P:protein transport"/>
    <property type="evidence" value="ECO:0007669"/>
    <property type="project" value="UniProtKB-UniRule"/>
</dbReference>
<dbReference type="Gene3D" id="3.10.420.10">
    <property type="entry name" value="SecB-like"/>
    <property type="match status" value="1"/>
</dbReference>
<dbReference type="HAMAP" id="MF_00821">
    <property type="entry name" value="SecB"/>
    <property type="match status" value="1"/>
</dbReference>
<dbReference type="InterPro" id="IPR003708">
    <property type="entry name" value="SecB"/>
</dbReference>
<dbReference type="InterPro" id="IPR035958">
    <property type="entry name" value="SecB-like_sf"/>
</dbReference>
<dbReference type="NCBIfam" id="NF004393">
    <property type="entry name" value="PRK05751.1-4"/>
    <property type="match status" value="1"/>
</dbReference>
<dbReference type="NCBIfam" id="TIGR00809">
    <property type="entry name" value="secB"/>
    <property type="match status" value="1"/>
</dbReference>
<dbReference type="PANTHER" id="PTHR36918">
    <property type="match status" value="1"/>
</dbReference>
<dbReference type="PANTHER" id="PTHR36918:SF1">
    <property type="entry name" value="PROTEIN-EXPORT PROTEIN SECB"/>
    <property type="match status" value="1"/>
</dbReference>
<dbReference type="Pfam" id="PF02556">
    <property type="entry name" value="SecB"/>
    <property type="match status" value="1"/>
</dbReference>
<dbReference type="PRINTS" id="PR01594">
    <property type="entry name" value="SECBCHAPRONE"/>
</dbReference>
<dbReference type="SUPFAM" id="SSF54611">
    <property type="entry name" value="SecB-like"/>
    <property type="match status" value="1"/>
</dbReference>
<gene>
    <name evidence="1" type="primary">secB</name>
    <name type="ordered locus">CbuG_0490</name>
</gene>
<evidence type="ECO:0000255" key="1">
    <source>
        <dbReference type="HAMAP-Rule" id="MF_00821"/>
    </source>
</evidence>
<comment type="function">
    <text evidence="1">One of the proteins required for the normal export of preproteins out of the cell cytoplasm. It is a molecular chaperone that binds to a subset of precursor proteins, maintaining them in a translocation-competent state. It also specifically binds to its receptor SecA.</text>
</comment>
<comment type="subunit">
    <text evidence="1">Homotetramer, a dimer of dimers. One homotetramer interacts with 1 SecA dimer.</text>
</comment>
<comment type="subcellular location">
    <subcellularLocation>
        <location evidence="1">Cytoplasm</location>
    </subcellularLocation>
</comment>
<comment type="similarity">
    <text evidence="1">Belongs to the SecB family.</text>
</comment>
<proteinExistence type="inferred from homology"/>